<protein>
    <recommendedName>
        <fullName>Vegetative protein 296</fullName>
        <shortName>VEG296</shortName>
    </recommendedName>
</protein>
<dbReference type="EMBL" id="AL009126">
    <property type="protein sequence ID" value="CAB15260.1"/>
    <property type="molecule type" value="Genomic_DNA"/>
</dbReference>
<dbReference type="PIR" id="H70019">
    <property type="entry name" value="H70019"/>
</dbReference>
<dbReference type="RefSeq" id="NP_391150.1">
    <property type="nucleotide sequence ID" value="NC_000964.3"/>
</dbReference>
<dbReference type="RefSeq" id="WP_003151872.1">
    <property type="nucleotide sequence ID" value="NZ_OZ025638.1"/>
</dbReference>
<dbReference type="SMR" id="P80866"/>
<dbReference type="FunCoup" id="P80866">
    <property type="interactions" value="458"/>
</dbReference>
<dbReference type="IntAct" id="P80866">
    <property type="interactions" value="3"/>
</dbReference>
<dbReference type="MINT" id="P80866"/>
<dbReference type="STRING" id="224308.BSU32710"/>
<dbReference type="jPOST" id="P80866"/>
<dbReference type="PaxDb" id="224308-BSU32710"/>
<dbReference type="EnsemblBacteria" id="CAB15260">
    <property type="protein sequence ID" value="CAB15260"/>
    <property type="gene ID" value="BSU_32710"/>
</dbReference>
<dbReference type="GeneID" id="76979750"/>
<dbReference type="GeneID" id="937073"/>
<dbReference type="KEGG" id="bsu:BSU32710"/>
<dbReference type="PATRIC" id="fig|224308.179.peg.3542"/>
<dbReference type="eggNOG" id="COG0396">
    <property type="taxonomic scope" value="Bacteria"/>
</dbReference>
<dbReference type="InParanoid" id="P80866"/>
<dbReference type="OrthoDB" id="9806149at2"/>
<dbReference type="PhylomeDB" id="P80866"/>
<dbReference type="BioCyc" id="BSUB:BSU32710-MONOMER"/>
<dbReference type="PRO" id="PR:P80866"/>
<dbReference type="Proteomes" id="UP000001570">
    <property type="component" value="Chromosome"/>
</dbReference>
<dbReference type="GO" id="GO:0005524">
    <property type="term" value="F:ATP binding"/>
    <property type="evidence" value="ECO:0007669"/>
    <property type="project" value="UniProtKB-KW"/>
</dbReference>
<dbReference type="GO" id="GO:0016887">
    <property type="term" value="F:ATP hydrolysis activity"/>
    <property type="evidence" value="ECO:0007669"/>
    <property type="project" value="InterPro"/>
</dbReference>
<dbReference type="CDD" id="cd03217">
    <property type="entry name" value="ABC_FeS_Assembly"/>
    <property type="match status" value="1"/>
</dbReference>
<dbReference type="Gene3D" id="3.40.50.300">
    <property type="entry name" value="P-loop containing nucleotide triphosphate hydrolases"/>
    <property type="match status" value="1"/>
</dbReference>
<dbReference type="InterPro" id="IPR003593">
    <property type="entry name" value="AAA+_ATPase"/>
</dbReference>
<dbReference type="InterPro" id="IPR003439">
    <property type="entry name" value="ABC_transporter-like_ATP-bd"/>
</dbReference>
<dbReference type="InterPro" id="IPR017871">
    <property type="entry name" value="ABC_transporter-like_CS"/>
</dbReference>
<dbReference type="InterPro" id="IPR010230">
    <property type="entry name" value="FeS-cluster_ATPase_SufC"/>
</dbReference>
<dbReference type="InterPro" id="IPR027417">
    <property type="entry name" value="P-loop_NTPase"/>
</dbReference>
<dbReference type="NCBIfam" id="TIGR01978">
    <property type="entry name" value="sufC"/>
    <property type="match status" value="1"/>
</dbReference>
<dbReference type="PANTHER" id="PTHR43204">
    <property type="entry name" value="ABC TRANSPORTER I FAMILY MEMBER 6, CHLOROPLASTIC"/>
    <property type="match status" value="1"/>
</dbReference>
<dbReference type="PANTHER" id="PTHR43204:SF1">
    <property type="entry name" value="ABC TRANSPORTER I FAMILY MEMBER 6, CHLOROPLASTIC"/>
    <property type="match status" value="1"/>
</dbReference>
<dbReference type="Pfam" id="PF00005">
    <property type="entry name" value="ABC_tran"/>
    <property type="match status" value="1"/>
</dbReference>
<dbReference type="SMART" id="SM00382">
    <property type="entry name" value="AAA"/>
    <property type="match status" value="1"/>
</dbReference>
<dbReference type="SUPFAM" id="SSF52540">
    <property type="entry name" value="P-loop containing nucleoside triphosphate hydrolases"/>
    <property type="match status" value="1"/>
</dbReference>
<dbReference type="PROSITE" id="PS00211">
    <property type="entry name" value="ABC_TRANSPORTER_1"/>
    <property type="match status" value="1"/>
</dbReference>
<dbReference type="PROSITE" id="PS50893">
    <property type="entry name" value="ABC_TRANSPORTER_2"/>
    <property type="match status" value="1"/>
</dbReference>
<organism>
    <name type="scientific">Bacillus subtilis (strain 168)</name>
    <dbReference type="NCBI Taxonomy" id="224308"/>
    <lineage>
        <taxon>Bacteria</taxon>
        <taxon>Bacillati</taxon>
        <taxon>Bacillota</taxon>
        <taxon>Bacilli</taxon>
        <taxon>Bacillales</taxon>
        <taxon>Bacillaceae</taxon>
        <taxon>Bacillus</taxon>
    </lineage>
</organism>
<evidence type="ECO:0000255" key="1">
    <source>
        <dbReference type="PROSITE-ProRule" id="PRU00434"/>
    </source>
</evidence>
<evidence type="ECO:0000269" key="2">
    <source>
    </source>
</evidence>
<evidence type="ECO:0000305" key="3"/>
<proteinExistence type="evidence at protein level"/>
<accession>P80866</accession>
<comment type="similarity">
    <text evidence="3">Belongs to the ABC transporter superfamily. Ycf16 family.</text>
</comment>
<name>SUFC_BACSU</name>
<gene>
    <name type="primary">sufC</name>
    <name type="synonym">yurY</name>
    <name type="ordered locus">BSU32710</name>
</gene>
<feature type="initiator methionine" description="Removed" evidence="2">
    <location>
        <position position="1"/>
    </location>
</feature>
<feature type="chain" id="PRO_0000093414" description="Vegetative protein 296">
    <location>
        <begin position="2"/>
        <end position="261"/>
    </location>
</feature>
<feature type="domain" description="ABC transporter" evidence="1">
    <location>
        <begin position="6"/>
        <end position="248"/>
    </location>
</feature>
<feature type="binding site" evidence="1">
    <location>
        <begin position="38"/>
        <end position="45"/>
    </location>
    <ligand>
        <name>ATP</name>
        <dbReference type="ChEBI" id="CHEBI:30616"/>
    </ligand>
</feature>
<sequence length="261" mass="29031">MAASTLTIKDLHVEIEGKEILKGVNLEIKGGEFHAVMGPNGTGKSTLSAAIMGHPKYEVTKGSITLDGKDVLEMEVDERAQAGLFLAMQYPSEISGVTNADFLRSAINARREEGDEISLMKFIRKMDENMEFLEMDPEMAQRYLNEGFSGGEKKRNEILQLMMIEPKIAILDEIDSGLDIDALKVVSKGINKMRSENFGCLMITHYQRLLNYITPDVVHVMMQGRVVKSGGAELAQRLEAEGYDWIKQELGIEDETVGQEA</sequence>
<reference key="1">
    <citation type="journal article" date="1997" name="Nature">
        <title>The complete genome sequence of the Gram-positive bacterium Bacillus subtilis.</title>
        <authorList>
            <person name="Kunst F."/>
            <person name="Ogasawara N."/>
            <person name="Moszer I."/>
            <person name="Albertini A.M."/>
            <person name="Alloni G."/>
            <person name="Azevedo V."/>
            <person name="Bertero M.G."/>
            <person name="Bessieres P."/>
            <person name="Bolotin A."/>
            <person name="Borchert S."/>
            <person name="Borriss R."/>
            <person name="Boursier L."/>
            <person name="Brans A."/>
            <person name="Braun M."/>
            <person name="Brignell S.C."/>
            <person name="Bron S."/>
            <person name="Brouillet S."/>
            <person name="Bruschi C.V."/>
            <person name="Caldwell B."/>
            <person name="Capuano V."/>
            <person name="Carter N.M."/>
            <person name="Choi S.-K."/>
            <person name="Codani J.-J."/>
            <person name="Connerton I.F."/>
            <person name="Cummings N.J."/>
            <person name="Daniel R.A."/>
            <person name="Denizot F."/>
            <person name="Devine K.M."/>
            <person name="Duesterhoeft A."/>
            <person name="Ehrlich S.D."/>
            <person name="Emmerson P.T."/>
            <person name="Entian K.-D."/>
            <person name="Errington J."/>
            <person name="Fabret C."/>
            <person name="Ferrari E."/>
            <person name="Foulger D."/>
            <person name="Fritz C."/>
            <person name="Fujita M."/>
            <person name="Fujita Y."/>
            <person name="Fuma S."/>
            <person name="Galizzi A."/>
            <person name="Galleron N."/>
            <person name="Ghim S.-Y."/>
            <person name="Glaser P."/>
            <person name="Goffeau A."/>
            <person name="Golightly E.J."/>
            <person name="Grandi G."/>
            <person name="Guiseppi G."/>
            <person name="Guy B.J."/>
            <person name="Haga K."/>
            <person name="Haiech J."/>
            <person name="Harwood C.R."/>
            <person name="Henaut A."/>
            <person name="Hilbert H."/>
            <person name="Holsappel S."/>
            <person name="Hosono S."/>
            <person name="Hullo M.-F."/>
            <person name="Itaya M."/>
            <person name="Jones L.-M."/>
            <person name="Joris B."/>
            <person name="Karamata D."/>
            <person name="Kasahara Y."/>
            <person name="Klaerr-Blanchard M."/>
            <person name="Klein C."/>
            <person name="Kobayashi Y."/>
            <person name="Koetter P."/>
            <person name="Koningstein G."/>
            <person name="Krogh S."/>
            <person name="Kumano M."/>
            <person name="Kurita K."/>
            <person name="Lapidus A."/>
            <person name="Lardinois S."/>
            <person name="Lauber J."/>
            <person name="Lazarevic V."/>
            <person name="Lee S.-M."/>
            <person name="Levine A."/>
            <person name="Liu H."/>
            <person name="Masuda S."/>
            <person name="Mauel C."/>
            <person name="Medigue C."/>
            <person name="Medina N."/>
            <person name="Mellado R.P."/>
            <person name="Mizuno M."/>
            <person name="Moestl D."/>
            <person name="Nakai S."/>
            <person name="Noback M."/>
            <person name="Noone D."/>
            <person name="O'Reilly M."/>
            <person name="Ogawa K."/>
            <person name="Ogiwara A."/>
            <person name="Oudega B."/>
            <person name="Park S.-H."/>
            <person name="Parro V."/>
            <person name="Pohl T.M."/>
            <person name="Portetelle D."/>
            <person name="Porwollik S."/>
            <person name="Prescott A.M."/>
            <person name="Presecan E."/>
            <person name="Pujic P."/>
            <person name="Purnelle B."/>
            <person name="Rapoport G."/>
            <person name="Rey M."/>
            <person name="Reynolds S."/>
            <person name="Rieger M."/>
            <person name="Rivolta C."/>
            <person name="Rocha E."/>
            <person name="Roche B."/>
            <person name="Rose M."/>
            <person name="Sadaie Y."/>
            <person name="Sato T."/>
            <person name="Scanlan E."/>
            <person name="Schleich S."/>
            <person name="Schroeter R."/>
            <person name="Scoffone F."/>
            <person name="Sekiguchi J."/>
            <person name="Sekowska A."/>
            <person name="Seror S.J."/>
            <person name="Serror P."/>
            <person name="Shin B.-S."/>
            <person name="Soldo B."/>
            <person name="Sorokin A."/>
            <person name="Tacconi E."/>
            <person name="Takagi T."/>
            <person name="Takahashi H."/>
            <person name="Takemaru K."/>
            <person name="Takeuchi M."/>
            <person name="Tamakoshi A."/>
            <person name="Tanaka T."/>
            <person name="Terpstra P."/>
            <person name="Tognoni A."/>
            <person name="Tosato V."/>
            <person name="Uchiyama S."/>
            <person name="Vandenbol M."/>
            <person name="Vannier F."/>
            <person name="Vassarotti A."/>
            <person name="Viari A."/>
            <person name="Wambutt R."/>
            <person name="Wedler E."/>
            <person name="Wedler H."/>
            <person name="Weitzenegger T."/>
            <person name="Winters P."/>
            <person name="Wipat A."/>
            <person name="Yamamoto H."/>
            <person name="Yamane K."/>
            <person name="Yasumoto K."/>
            <person name="Yata K."/>
            <person name="Yoshida K."/>
            <person name="Yoshikawa H.-F."/>
            <person name="Zumstein E."/>
            <person name="Yoshikawa H."/>
            <person name="Danchin A."/>
        </authorList>
    </citation>
    <scope>NUCLEOTIDE SEQUENCE [LARGE SCALE GENOMIC DNA]</scope>
    <source>
        <strain>168</strain>
    </source>
</reference>
<reference key="2">
    <citation type="journal article" date="1997" name="Electrophoresis">
        <title>First steps from a two-dimensional protein index towards a response-regulation map for Bacillus subtilis.</title>
        <authorList>
            <person name="Antelmann H."/>
            <person name="Bernhardt J."/>
            <person name="Schmid R."/>
            <person name="Mach H."/>
            <person name="Voelker U."/>
            <person name="Hecker M."/>
        </authorList>
    </citation>
    <scope>PROTEIN SEQUENCE OF 2-10</scope>
    <source>
        <strain>168 / IS58</strain>
    </source>
</reference>
<keyword id="KW-0067">ATP-binding</keyword>
<keyword id="KW-0903">Direct protein sequencing</keyword>
<keyword id="KW-0547">Nucleotide-binding</keyword>
<keyword id="KW-1185">Reference proteome</keyword>
<keyword id="KW-0813">Transport</keyword>